<feature type="chain" id="PRO_1000095363" description="Arginine--tRNA ligase">
    <location>
        <begin position="1"/>
        <end position="576"/>
    </location>
</feature>
<feature type="short sequence motif" description="'HIGH' region">
    <location>
        <begin position="122"/>
        <end position="132"/>
    </location>
</feature>
<protein>
    <recommendedName>
        <fullName evidence="1">Arginine--tRNA ligase</fullName>
        <ecNumber evidence="1">6.1.1.19</ecNumber>
    </recommendedName>
    <alternativeName>
        <fullName evidence="1">Arginyl-tRNA synthetase</fullName>
        <shortName evidence="1">ArgRS</shortName>
    </alternativeName>
</protein>
<sequence>MNIQALLSEKVSHAMIAVGAPADCEPQVRQSAKAQFGDYQANGMMAVAKKMGMPPRQLAEKVLEQLDLSGIAAKVEIAGPGFINIFLAQEWLSAQIDGVLTAPKLGVAPVAPKTVVIDYSAPNVAKEMHVGHVRSTIIGDAAARTLEFLGHKVIRANHVGDWGTQFGMLIAFLEKQQSEHHEAIALADLEAFYREAKRTYDEDPAFAERARGYVVKLQGGDEYCRKMWKQLVDVTMTQNQLIYDRMNVTLTRDDVMGESLYNDMLPGIVADLKAKGLAVESEGATVVFLDEYKNKEGEPMGVIIRKKDGGYLYTTTDIACAKYRYETLKADRVLYYIDSRQHQHLMQAWTIVRKAGYVPDSIPLEHHMFGMMLGKDGKPFKTRAGGTIKLSDLLDEAVDRATKLVAEKNPDMPADELNALANIVGIGAVKYADLSKSRTTDYIFDWDNMLAFEGNTAPYMQYAYTRVLSVFRKAGIDAEAVSGVTRIVDDREAALAVRLLQFEETITQVARDGMPHVMCAYLYDLAGLFSGFYEHCPILNAEDEATKQSRLRLALLTAKTLKQGLDTLGIETVERM</sequence>
<comment type="catalytic activity">
    <reaction evidence="1">
        <text>tRNA(Arg) + L-arginine + ATP = L-arginyl-tRNA(Arg) + AMP + diphosphate</text>
        <dbReference type="Rhea" id="RHEA:20301"/>
        <dbReference type="Rhea" id="RHEA-COMP:9658"/>
        <dbReference type="Rhea" id="RHEA-COMP:9673"/>
        <dbReference type="ChEBI" id="CHEBI:30616"/>
        <dbReference type="ChEBI" id="CHEBI:32682"/>
        <dbReference type="ChEBI" id="CHEBI:33019"/>
        <dbReference type="ChEBI" id="CHEBI:78442"/>
        <dbReference type="ChEBI" id="CHEBI:78513"/>
        <dbReference type="ChEBI" id="CHEBI:456215"/>
        <dbReference type="EC" id="6.1.1.19"/>
    </reaction>
</comment>
<comment type="subunit">
    <text evidence="1">Monomer.</text>
</comment>
<comment type="subcellular location">
    <subcellularLocation>
        <location evidence="1">Cytoplasm</location>
    </subcellularLocation>
</comment>
<comment type="similarity">
    <text evidence="1">Belongs to the class-I aminoacyl-tRNA synthetase family.</text>
</comment>
<gene>
    <name evidence="1" type="primary">argS</name>
    <name type="ordered locus">ETA_14750</name>
</gene>
<organism>
    <name type="scientific">Erwinia tasmaniensis (strain DSM 17950 / CFBP 7177 / CIP 109463 / NCPPB 4357 / Et1/99)</name>
    <dbReference type="NCBI Taxonomy" id="465817"/>
    <lineage>
        <taxon>Bacteria</taxon>
        <taxon>Pseudomonadati</taxon>
        <taxon>Pseudomonadota</taxon>
        <taxon>Gammaproteobacteria</taxon>
        <taxon>Enterobacterales</taxon>
        <taxon>Erwiniaceae</taxon>
        <taxon>Erwinia</taxon>
    </lineage>
</organism>
<proteinExistence type="inferred from homology"/>
<accession>B2VJB6</accession>
<name>SYR_ERWT9</name>
<evidence type="ECO:0000255" key="1">
    <source>
        <dbReference type="HAMAP-Rule" id="MF_00123"/>
    </source>
</evidence>
<reference key="1">
    <citation type="journal article" date="2008" name="Environ. Microbiol.">
        <title>The genome of Erwinia tasmaniensis strain Et1/99, a non-pathogenic bacterium in the genus Erwinia.</title>
        <authorList>
            <person name="Kube M."/>
            <person name="Migdoll A.M."/>
            <person name="Mueller I."/>
            <person name="Kuhl H."/>
            <person name="Beck A."/>
            <person name="Reinhardt R."/>
            <person name="Geider K."/>
        </authorList>
    </citation>
    <scope>NUCLEOTIDE SEQUENCE [LARGE SCALE GENOMIC DNA]</scope>
    <source>
        <strain>DSM 17950 / CFBP 7177 / CIP 109463 / NCPPB 4357 / Et1/99</strain>
    </source>
</reference>
<keyword id="KW-0030">Aminoacyl-tRNA synthetase</keyword>
<keyword id="KW-0067">ATP-binding</keyword>
<keyword id="KW-0963">Cytoplasm</keyword>
<keyword id="KW-0436">Ligase</keyword>
<keyword id="KW-0547">Nucleotide-binding</keyword>
<keyword id="KW-0648">Protein biosynthesis</keyword>
<keyword id="KW-1185">Reference proteome</keyword>
<dbReference type="EC" id="6.1.1.19" evidence="1"/>
<dbReference type="EMBL" id="CU468135">
    <property type="protein sequence ID" value="CAO96521.1"/>
    <property type="molecule type" value="Genomic_DNA"/>
</dbReference>
<dbReference type="RefSeq" id="WP_012441215.1">
    <property type="nucleotide sequence ID" value="NC_010694.1"/>
</dbReference>
<dbReference type="SMR" id="B2VJB6"/>
<dbReference type="STRING" id="465817.ETA_14750"/>
<dbReference type="KEGG" id="eta:ETA_14750"/>
<dbReference type="eggNOG" id="COG0018">
    <property type="taxonomic scope" value="Bacteria"/>
</dbReference>
<dbReference type="HOGENOM" id="CLU_006406_5_1_6"/>
<dbReference type="OrthoDB" id="9803211at2"/>
<dbReference type="Proteomes" id="UP000001726">
    <property type="component" value="Chromosome"/>
</dbReference>
<dbReference type="GO" id="GO:0005737">
    <property type="term" value="C:cytoplasm"/>
    <property type="evidence" value="ECO:0007669"/>
    <property type="project" value="UniProtKB-SubCell"/>
</dbReference>
<dbReference type="GO" id="GO:0004814">
    <property type="term" value="F:arginine-tRNA ligase activity"/>
    <property type="evidence" value="ECO:0007669"/>
    <property type="project" value="UniProtKB-UniRule"/>
</dbReference>
<dbReference type="GO" id="GO:0005524">
    <property type="term" value="F:ATP binding"/>
    <property type="evidence" value="ECO:0007669"/>
    <property type="project" value="UniProtKB-UniRule"/>
</dbReference>
<dbReference type="GO" id="GO:0006420">
    <property type="term" value="P:arginyl-tRNA aminoacylation"/>
    <property type="evidence" value="ECO:0007669"/>
    <property type="project" value="UniProtKB-UniRule"/>
</dbReference>
<dbReference type="CDD" id="cd07956">
    <property type="entry name" value="Anticodon_Ia_Arg"/>
    <property type="match status" value="1"/>
</dbReference>
<dbReference type="CDD" id="cd00671">
    <property type="entry name" value="ArgRS_core"/>
    <property type="match status" value="1"/>
</dbReference>
<dbReference type="FunFam" id="1.10.730.10:FF:000001">
    <property type="entry name" value="Arginine--tRNA ligase"/>
    <property type="match status" value="1"/>
</dbReference>
<dbReference type="FunFam" id="3.30.1360.70:FF:000001">
    <property type="entry name" value="Arginine--tRNA ligase"/>
    <property type="match status" value="1"/>
</dbReference>
<dbReference type="FunFam" id="3.40.50.620:FF:000030">
    <property type="entry name" value="Arginine--tRNA ligase"/>
    <property type="match status" value="1"/>
</dbReference>
<dbReference type="Gene3D" id="3.30.1360.70">
    <property type="entry name" value="Arginyl tRNA synthetase N-terminal domain"/>
    <property type="match status" value="1"/>
</dbReference>
<dbReference type="Gene3D" id="3.40.50.620">
    <property type="entry name" value="HUPs"/>
    <property type="match status" value="1"/>
</dbReference>
<dbReference type="Gene3D" id="1.10.730.10">
    <property type="entry name" value="Isoleucyl-tRNA Synthetase, Domain 1"/>
    <property type="match status" value="1"/>
</dbReference>
<dbReference type="HAMAP" id="MF_00123">
    <property type="entry name" value="Arg_tRNA_synth"/>
    <property type="match status" value="1"/>
</dbReference>
<dbReference type="InterPro" id="IPR001412">
    <property type="entry name" value="aa-tRNA-synth_I_CS"/>
</dbReference>
<dbReference type="InterPro" id="IPR001278">
    <property type="entry name" value="Arg-tRNA-ligase"/>
</dbReference>
<dbReference type="InterPro" id="IPR005148">
    <property type="entry name" value="Arg-tRNA-synth_N"/>
</dbReference>
<dbReference type="InterPro" id="IPR036695">
    <property type="entry name" value="Arg-tRNA-synth_N_sf"/>
</dbReference>
<dbReference type="InterPro" id="IPR035684">
    <property type="entry name" value="ArgRS_core"/>
</dbReference>
<dbReference type="InterPro" id="IPR008909">
    <property type="entry name" value="DALR_anticod-bd"/>
</dbReference>
<dbReference type="InterPro" id="IPR014729">
    <property type="entry name" value="Rossmann-like_a/b/a_fold"/>
</dbReference>
<dbReference type="InterPro" id="IPR009080">
    <property type="entry name" value="tRNAsynth_Ia_anticodon-bd"/>
</dbReference>
<dbReference type="NCBIfam" id="TIGR00456">
    <property type="entry name" value="argS"/>
    <property type="match status" value="1"/>
</dbReference>
<dbReference type="PANTHER" id="PTHR11956:SF5">
    <property type="entry name" value="ARGININE--TRNA LIGASE, CYTOPLASMIC"/>
    <property type="match status" value="1"/>
</dbReference>
<dbReference type="PANTHER" id="PTHR11956">
    <property type="entry name" value="ARGINYL-TRNA SYNTHETASE"/>
    <property type="match status" value="1"/>
</dbReference>
<dbReference type="Pfam" id="PF03485">
    <property type="entry name" value="Arg_tRNA_synt_N"/>
    <property type="match status" value="1"/>
</dbReference>
<dbReference type="Pfam" id="PF05746">
    <property type="entry name" value="DALR_1"/>
    <property type="match status" value="1"/>
</dbReference>
<dbReference type="Pfam" id="PF00750">
    <property type="entry name" value="tRNA-synt_1d"/>
    <property type="match status" value="1"/>
</dbReference>
<dbReference type="PRINTS" id="PR01038">
    <property type="entry name" value="TRNASYNTHARG"/>
</dbReference>
<dbReference type="SMART" id="SM01016">
    <property type="entry name" value="Arg_tRNA_synt_N"/>
    <property type="match status" value="1"/>
</dbReference>
<dbReference type="SMART" id="SM00836">
    <property type="entry name" value="DALR_1"/>
    <property type="match status" value="1"/>
</dbReference>
<dbReference type="SUPFAM" id="SSF47323">
    <property type="entry name" value="Anticodon-binding domain of a subclass of class I aminoacyl-tRNA synthetases"/>
    <property type="match status" value="1"/>
</dbReference>
<dbReference type="SUPFAM" id="SSF55190">
    <property type="entry name" value="Arginyl-tRNA synthetase (ArgRS), N-terminal 'additional' domain"/>
    <property type="match status" value="1"/>
</dbReference>
<dbReference type="SUPFAM" id="SSF52374">
    <property type="entry name" value="Nucleotidylyl transferase"/>
    <property type="match status" value="1"/>
</dbReference>
<dbReference type="PROSITE" id="PS00178">
    <property type="entry name" value="AA_TRNA_LIGASE_I"/>
    <property type="match status" value="1"/>
</dbReference>